<sequence>MSTENTNTAVAEEIPNLLITPSAQEYLHELLAKQNTPGIGVRIFVEHPGTPRAECCMAYSAPEEVVPTDYKQDYPDFPAYIDAPSIPYLLDAVIDYNKDRFGGQLTFRAPNSKVPRVGPDASIEERITYVLQAEINPGLAGHGGNCSLVEVQDDPEHGLTAVLKFGGGCQGCSAIDVTLKQGVETTLKEHIPELQRVVDQTDHTQAEGAYFK</sequence>
<comment type="function">
    <text evidence="1">Involved in iron-sulfur cluster biogenesis. Binds a 4Fe-4S cluster, can transfer this cluster to apoproteins, and thereby intervenes in the maturation of Fe/S proteins. Could also act as a scaffold/chaperone for damaged Fe/S proteins.</text>
</comment>
<comment type="cofactor">
    <cofactor evidence="1">
        <name>[4Fe-4S] cluster</name>
        <dbReference type="ChEBI" id="CHEBI:49883"/>
    </cofactor>
    <text evidence="1">Binds 1 [4Fe-4S] cluster per subunit. The cluster is presumably bound at the interface of two monomers.</text>
</comment>
<comment type="subunit">
    <text evidence="1">Homodimer.</text>
</comment>
<comment type="similarity">
    <text evidence="1">Belongs to the NfuA family.</text>
</comment>
<evidence type="ECO:0000255" key="1">
    <source>
        <dbReference type="HAMAP-Rule" id="MF_01637"/>
    </source>
</evidence>
<gene>
    <name evidence="1" type="primary">nfuA</name>
    <name type="ordered locus">ACICU_00941</name>
</gene>
<name>NFUA_ACIBC</name>
<organism>
    <name type="scientific">Acinetobacter baumannii (strain ACICU)</name>
    <dbReference type="NCBI Taxonomy" id="405416"/>
    <lineage>
        <taxon>Bacteria</taxon>
        <taxon>Pseudomonadati</taxon>
        <taxon>Pseudomonadota</taxon>
        <taxon>Gammaproteobacteria</taxon>
        <taxon>Moraxellales</taxon>
        <taxon>Moraxellaceae</taxon>
        <taxon>Acinetobacter</taxon>
        <taxon>Acinetobacter calcoaceticus/baumannii complex</taxon>
    </lineage>
</organism>
<reference key="1">
    <citation type="journal article" date="2008" name="Antimicrob. Agents Chemother.">
        <title>Whole-genome pyrosequencing of an epidemic multidrug-resistant Acinetobacter baumannii strain belonging to the European clone II group.</title>
        <authorList>
            <person name="Iacono M."/>
            <person name="Villa L."/>
            <person name="Fortini D."/>
            <person name="Bordoni R."/>
            <person name="Imperi F."/>
            <person name="Bonnal R.J."/>
            <person name="Sicheritz-Ponten T."/>
            <person name="De Bellis G."/>
            <person name="Visca P."/>
            <person name="Cassone A."/>
            <person name="Carattoli A."/>
        </authorList>
    </citation>
    <scope>NUCLEOTIDE SEQUENCE [LARGE SCALE GENOMIC DNA]</scope>
    <source>
        <strain>ACICU</strain>
    </source>
</reference>
<accession>B2HVD2</accession>
<dbReference type="EMBL" id="CP000863">
    <property type="protein sequence ID" value="ACC56253.1"/>
    <property type="molecule type" value="Genomic_DNA"/>
</dbReference>
<dbReference type="RefSeq" id="WP_000102721.1">
    <property type="nucleotide sequence ID" value="NZ_CP031380.1"/>
</dbReference>
<dbReference type="SMR" id="B2HVD2"/>
<dbReference type="GeneID" id="92892942"/>
<dbReference type="KEGG" id="abc:ACICU_00941"/>
<dbReference type="HOGENOM" id="CLU_094569_0_0_6"/>
<dbReference type="Proteomes" id="UP000008839">
    <property type="component" value="Chromosome"/>
</dbReference>
<dbReference type="GO" id="GO:0051539">
    <property type="term" value="F:4 iron, 4 sulfur cluster binding"/>
    <property type="evidence" value="ECO:0007669"/>
    <property type="project" value="UniProtKB-UniRule"/>
</dbReference>
<dbReference type="GO" id="GO:0005506">
    <property type="term" value="F:iron ion binding"/>
    <property type="evidence" value="ECO:0007669"/>
    <property type="project" value="InterPro"/>
</dbReference>
<dbReference type="GO" id="GO:0016226">
    <property type="term" value="P:iron-sulfur cluster assembly"/>
    <property type="evidence" value="ECO:0007669"/>
    <property type="project" value="UniProtKB-UniRule"/>
</dbReference>
<dbReference type="GO" id="GO:0051604">
    <property type="term" value="P:protein maturation"/>
    <property type="evidence" value="ECO:0007669"/>
    <property type="project" value="UniProtKB-UniRule"/>
</dbReference>
<dbReference type="Gene3D" id="3.30.300.130">
    <property type="entry name" value="Fe-S cluster assembly (FSCA)"/>
    <property type="match status" value="1"/>
</dbReference>
<dbReference type="Gene3D" id="2.60.300.12">
    <property type="entry name" value="HesB-like domain"/>
    <property type="match status" value="1"/>
</dbReference>
<dbReference type="HAMAP" id="MF_01637">
    <property type="entry name" value="Fe_S_biogen_NfuA"/>
    <property type="match status" value="1"/>
</dbReference>
<dbReference type="InterPro" id="IPR017726">
    <property type="entry name" value="Fe/S_biogenesis_protein_NfuA"/>
</dbReference>
<dbReference type="InterPro" id="IPR000361">
    <property type="entry name" value="FeS_biogenesis"/>
</dbReference>
<dbReference type="InterPro" id="IPR034904">
    <property type="entry name" value="FSCA_dom_sf"/>
</dbReference>
<dbReference type="InterPro" id="IPR035903">
    <property type="entry name" value="HesB-like_dom_sf"/>
</dbReference>
<dbReference type="InterPro" id="IPR001075">
    <property type="entry name" value="NIF_FeS_clus_asmbl_NifU_C"/>
</dbReference>
<dbReference type="NCBIfam" id="TIGR03341">
    <property type="entry name" value="YhgI_GntY"/>
    <property type="match status" value="1"/>
</dbReference>
<dbReference type="PANTHER" id="PTHR11178:SF51">
    <property type="entry name" value="FE_S BIOGENESIS PROTEIN NFUA"/>
    <property type="match status" value="1"/>
</dbReference>
<dbReference type="PANTHER" id="PTHR11178">
    <property type="entry name" value="IRON-SULFUR CLUSTER SCAFFOLD PROTEIN NFU-RELATED"/>
    <property type="match status" value="1"/>
</dbReference>
<dbReference type="Pfam" id="PF01521">
    <property type="entry name" value="Fe-S_biosyn"/>
    <property type="match status" value="1"/>
</dbReference>
<dbReference type="Pfam" id="PF01106">
    <property type="entry name" value="NifU"/>
    <property type="match status" value="1"/>
</dbReference>
<dbReference type="SUPFAM" id="SSF117916">
    <property type="entry name" value="Fe-S cluster assembly (FSCA) domain-like"/>
    <property type="match status" value="1"/>
</dbReference>
<dbReference type="SUPFAM" id="SSF89360">
    <property type="entry name" value="HesB-like domain"/>
    <property type="match status" value="1"/>
</dbReference>
<keyword id="KW-0004">4Fe-4S</keyword>
<keyword id="KW-0408">Iron</keyword>
<keyword id="KW-0411">Iron-sulfur</keyword>
<keyword id="KW-0479">Metal-binding</keyword>
<protein>
    <recommendedName>
        <fullName evidence="1">Fe/S biogenesis protein NfuA</fullName>
    </recommendedName>
</protein>
<feature type="chain" id="PRO_1000186729" description="Fe/S biogenesis protein NfuA">
    <location>
        <begin position="1"/>
        <end position="212"/>
    </location>
</feature>
<feature type="binding site" evidence="1">
    <location>
        <position position="169"/>
    </location>
    <ligand>
        <name>[4Fe-4S] cluster</name>
        <dbReference type="ChEBI" id="CHEBI:49883"/>
    </ligand>
</feature>
<feature type="binding site" evidence="1">
    <location>
        <position position="172"/>
    </location>
    <ligand>
        <name>[4Fe-4S] cluster</name>
        <dbReference type="ChEBI" id="CHEBI:49883"/>
    </ligand>
</feature>
<proteinExistence type="inferred from homology"/>